<organism>
    <name type="scientific">Pongo abelii</name>
    <name type="common">Sumatran orangutan</name>
    <name type="synonym">Pongo pygmaeus abelii</name>
    <dbReference type="NCBI Taxonomy" id="9601"/>
    <lineage>
        <taxon>Eukaryota</taxon>
        <taxon>Metazoa</taxon>
        <taxon>Chordata</taxon>
        <taxon>Craniata</taxon>
        <taxon>Vertebrata</taxon>
        <taxon>Euteleostomi</taxon>
        <taxon>Mammalia</taxon>
        <taxon>Eutheria</taxon>
        <taxon>Euarchontoglires</taxon>
        <taxon>Primates</taxon>
        <taxon>Haplorrhini</taxon>
        <taxon>Catarrhini</taxon>
        <taxon>Hominidae</taxon>
        <taxon>Pongo</taxon>
    </lineage>
</organism>
<sequence>MSTARTENPVIMGLSSQNGQLRGPVKPTGGPGGGGTQTQQQMNQLKNTNTINNGTQQQAQSMTTTIKPGDDWKKTLKLPPKDLRIKTSDVTSTKGNEFEDYCLKRELLMGIFEMGWEKPSPIQEESIPIALSGRDILARAKNGTGKSGAYLIPLLERLDLKKDNIQAMVIVPTRELALQVSQICIQVSKHMGGAKVMATTGGTNLRGDIMRLDDTVHVVIATPGRILDLIKKGVAKVDHVQMIVLDEADKLLSQDFVQIMEDIILTLPKNRQILLYSATFPLSVQKFMNSHLQKPYEINLMEELTLKGVTQYYAYVTERQKVHCLNTLFSRLQINQSIIFCNSSQRVELLAKKISQLGYSCFYIHAKMRQEHRNRVFHDFRNGLCRNLVCTDLFTRGIDIQAVNVVINFDFPKLAETYLHRIGGSGRFGHLGLAINLITYDDRFNLKSIEEQLGTEIKPIPSNIDKSLYVAEYHSEPVEDEKP</sequence>
<proteinExistence type="evidence at transcript level"/>
<reference key="1">
    <citation type="submission" date="2004-11" db="EMBL/GenBank/DDBJ databases">
        <authorList>
            <consortium name="The German cDNA consortium"/>
        </authorList>
    </citation>
    <scope>NUCLEOTIDE SEQUENCE [LARGE SCALE MRNA]</scope>
    <source>
        <tissue>Kidney</tissue>
    </source>
</reference>
<accession>Q5RFQ5</accession>
<comment type="function">
    <text evidence="1">Essential for the formation of P-bodies, cytosolic membrane-less ribonucleoprotein granules involved in RNA metabolism through the coordinated storage of mRNAs encoding regulatory functions. Plays a role in P-bodies to coordinate the storage of translationally inactive mRNAs in the cytoplasm and prevent their degradation. In the process of mRNA degradation, plays a role in mRNA decapping. Blocks autophagy in nutrient-rich conditions by repressing the expression of ATG-related genes through degradation of their transcripts.</text>
</comment>
<comment type="catalytic activity">
    <reaction evidence="1">
        <text>ATP + H2O = ADP + phosphate + H(+)</text>
        <dbReference type="Rhea" id="RHEA:13065"/>
        <dbReference type="ChEBI" id="CHEBI:15377"/>
        <dbReference type="ChEBI" id="CHEBI:15378"/>
        <dbReference type="ChEBI" id="CHEBI:30616"/>
        <dbReference type="ChEBI" id="CHEBI:43474"/>
        <dbReference type="ChEBI" id="CHEBI:456216"/>
        <dbReference type="EC" id="3.6.4.13"/>
    </reaction>
</comment>
<comment type="subunit">
    <text evidence="1 2">Interacts with LSM14A, LSM14B, EIF4ENIF1/4E-T, PATL1, EDC3 and EDC4 (By similarity). Forms a complex with DCP1A, DCP2, EDC3 and EDC4/HEDLS. Interacts with LIMD1, WTIP and AJUBA. Interacts with APOBEC3G in an RNA-dependent manner (By similarity). Interacts with RC3H1 (By similarity). Interacts with ATXN2L. Interacts with MCRIP1. Interacts with MCRIP2. Interacts with NUFIP2. Interacts with TRIM71 (via NHL repeats) in an RNA-dependent manner (By similarity).</text>
</comment>
<comment type="subcellular location">
    <subcellularLocation>
        <location evidence="1">Cytoplasm</location>
        <location evidence="1">P-body</location>
    </subcellularLocation>
    <subcellularLocation>
        <location evidence="1">Cytoplasm</location>
    </subcellularLocation>
    <subcellularLocation>
        <location evidence="1">Nucleus</location>
    </subcellularLocation>
    <subcellularLocation>
        <location evidence="2">Cytoplasm</location>
        <location evidence="2">Cytoplasmic ribonucleoprotein granule</location>
    </subcellularLocation>
    <text evidence="1">Imported in the nucleus via interaction with EIF4ENIF1/4E-T via a piggy-back mechanism. Upon cellular stress, relocalizes to stress granules.</text>
</comment>
<comment type="PTM">
    <text evidence="1">Sumoylated.</text>
</comment>
<comment type="similarity">
    <text evidence="6">Belongs to the DEAD box helicase family. DDX6/DHH1 subfamily.</text>
</comment>
<name>DDX6_PONAB</name>
<dbReference type="EC" id="3.6.4.13" evidence="1"/>
<dbReference type="EMBL" id="CR857097">
    <property type="protein sequence ID" value="CAH89402.1"/>
    <property type="molecule type" value="mRNA"/>
</dbReference>
<dbReference type="RefSeq" id="NP_001128971.1">
    <property type="nucleotide sequence ID" value="NM_001135499.1"/>
</dbReference>
<dbReference type="SMR" id="Q5RFQ5"/>
<dbReference type="FunCoup" id="Q5RFQ5">
    <property type="interactions" value="3793"/>
</dbReference>
<dbReference type="STRING" id="9601.ENSPPYP00000004516"/>
<dbReference type="GeneID" id="100190811"/>
<dbReference type="KEGG" id="pon:100190811"/>
<dbReference type="CTD" id="1656"/>
<dbReference type="eggNOG" id="KOG0326">
    <property type="taxonomic scope" value="Eukaryota"/>
</dbReference>
<dbReference type="InParanoid" id="Q5RFQ5"/>
<dbReference type="OrthoDB" id="10265785at2759"/>
<dbReference type="Proteomes" id="UP000001595">
    <property type="component" value="Unplaced"/>
</dbReference>
<dbReference type="GO" id="GO:0005737">
    <property type="term" value="C:cytoplasm"/>
    <property type="evidence" value="ECO:0000250"/>
    <property type="project" value="UniProtKB"/>
</dbReference>
<dbReference type="GO" id="GO:0036464">
    <property type="term" value="C:cytoplasmic ribonucleoprotein granule"/>
    <property type="evidence" value="ECO:0000250"/>
    <property type="project" value="UniProtKB"/>
</dbReference>
<dbReference type="GO" id="GO:0010494">
    <property type="term" value="C:cytoplasmic stress granule"/>
    <property type="evidence" value="ECO:0000250"/>
    <property type="project" value="UniProtKB"/>
</dbReference>
<dbReference type="GO" id="GO:0005634">
    <property type="term" value="C:nucleus"/>
    <property type="evidence" value="ECO:0000250"/>
    <property type="project" value="UniProtKB"/>
</dbReference>
<dbReference type="GO" id="GO:0000932">
    <property type="term" value="C:P-body"/>
    <property type="evidence" value="ECO:0000250"/>
    <property type="project" value="UniProtKB"/>
</dbReference>
<dbReference type="GO" id="GO:0005524">
    <property type="term" value="F:ATP binding"/>
    <property type="evidence" value="ECO:0007669"/>
    <property type="project" value="UniProtKB-KW"/>
</dbReference>
<dbReference type="GO" id="GO:0016887">
    <property type="term" value="F:ATP hydrolysis activity"/>
    <property type="evidence" value="ECO:0007669"/>
    <property type="project" value="RHEA"/>
</dbReference>
<dbReference type="GO" id="GO:0003723">
    <property type="term" value="F:RNA binding"/>
    <property type="evidence" value="ECO:0007669"/>
    <property type="project" value="UniProtKB-KW"/>
</dbReference>
<dbReference type="GO" id="GO:0003724">
    <property type="term" value="F:RNA helicase activity"/>
    <property type="evidence" value="ECO:0007669"/>
    <property type="project" value="UniProtKB-EC"/>
</dbReference>
<dbReference type="GO" id="GO:0035278">
    <property type="term" value="P:miRNA-mediated gene silencing by inhibition of translation"/>
    <property type="evidence" value="ECO:0000250"/>
    <property type="project" value="UniProtKB"/>
</dbReference>
<dbReference type="GO" id="GO:0017148">
    <property type="term" value="P:negative regulation of translation"/>
    <property type="evidence" value="ECO:0000250"/>
    <property type="project" value="UniProtKB"/>
</dbReference>
<dbReference type="GO" id="GO:0033962">
    <property type="term" value="P:P-body assembly"/>
    <property type="evidence" value="ECO:0000250"/>
    <property type="project" value="UniProtKB"/>
</dbReference>
<dbReference type="CDD" id="cd17940">
    <property type="entry name" value="DEADc_DDX6"/>
    <property type="match status" value="1"/>
</dbReference>
<dbReference type="CDD" id="cd18787">
    <property type="entry name" value="SF2_C_DEAD"/>
    <property type="match status" value="1"/>
</dbReference>
<dbReference type="FunFam" id="3.40.50.300:FF:000114">
    <property type="entry name" value="ATP-dependent RNA helicase DDX6"/>
    <property type="match status" value="1"/>
</dbReference>
<dbReference type="FunFam" id="3.40.50.300:FF:000364">
    <property type="entry name" value="ATP-dependent RNA helicase DDX6"/>
    <property type="match status" value="1"/>
</dbReference>
<dbReference type="Gene3D" id="3.40.50.300">
    <property type="entry name" value="P-loop containing nucleotide triphosphate hydrolases"/>
    <property type="match status" value="2"/>
</dbReference>
<dbReference type="InterPro" id="IPR011545">
    <property type="entry name" value="DEAD/DEAH_box_helicase_dom"/>
</dbReference>
<dbReference type="InterPro" id="IPR014001">
    <property type="entry name" value="Helicase_ATP-bd"/>
</dbReference>
<dbReference type="InterPro" id="IPR001650">
    <property type="entry name" value="Helicase_C-like"/>
</dbReference>
<dbReference type="InterPro" id="IPR027417">
    <property type="entry name" value="P-loop_NTPase"/>
</dbReference>
<dbReference type="InterPro" id="IPR000629">
    <property type="entry name" value="RNA-helicase_DEAD-box_CS"/>
</dbReference>
<dbReference type="InterPro" id="IPR014014">
    <property type="entry name" value="RNA_helicase_DEAD_Q_motif"/>
</dbReference>
<dbReference type="PANTHER" id="PTHR47960">
    <property type="entry name" value="DEAD-BOX ATP-DEPENDENT RNA HELICASE 50"/>
    <property type="match status" value="1"/>
</dbReference>
<dbReference type="Pfam" id="PF00270">
    <property type="entry name" value="DEAD"/>
    <property type="match status" value="1"/>
</dbReference>
<dbReference type="Pfam" id="PF00271">
    <property type="entry name" value="Helicase_C"/>
    <property type="match status" value="1"/>
</dbReference>
<dbReference type="SMART" id="SM00487">
    <property type="entry name" value="DEXDc"/>
    <property type="match status" value="1"/>
</dbReference>
<dbReference type="SMART" id="SM00490">
    <property type="entry name" value="HELICc"/>
    <property type="match status" value="1"/>
</dbReference>
<dbReference type="SUPFAM" id="SSF52540">
    <property type="entry name" value="P-loop containing nucleoside triphosphate hydrolases"/>
    <property type="match status" value="1"/>
</dbReference>
<dbReference type="PROSITE" id="PS00039">
    <property type="entry name" value="DEAD_ATP_HELICASE"/>
    <property type="match status" value="1"/>
</dbReference>
<dbReference type="PROSITE" id="PS51192">
    <property type="entry name" value="HELICASE_ATP_BIND_1"/>
    <property type="match status" value="1"/>
</dbReference>
<dbReference type="PROSITE" id="PS51194">
    <property type="entry name" value="HELICASE_CTER"/>
    <property type="match status" value="1"/>
</dbReference>
<dbReference type="PROSITE" id="PS51195">
    <property type="entry name" value="Q_MOTIF"/>
    <property type="match status" value="1"/>
</dbReference>
<evidence type="ECO:0000250" key="1">
    <source>
        <dbReference type="UniProtKB" id="P26196"/>
    </source>
</evidence>
<evidence type="ECO:0000250" key="2">
    <source>
        <dbReference type="UniProtKB" id="P54823"/>
    </source>
</evidence>
<evidence type="ECO:0000255" key="3">
    <source>
        <dbReference type="PROSITE-ProRule" id="PRU00541"/>
    </source>
</evidence>
<evidence type="ECO:0000255" key="4">
    <source>
        <dbReference type="PROSITE-ProRule" id="PRU00542"/>
    </source>
</evidence>
<evidence type="ECO:0000256" key="5">
    <source>
        <dbReference type="SAM" id="MobiDB-lite"/>
    </source>
</evidence>
<evidence type="ECO:0000305" key="6"/>
<keyword id="KW-0067">ATP-binding</keyword>
<keyword id="KW-0963">Cytoplasm</keyword>
<keyword id="KW-0347">Helicase</keyword>
<keyword id="KW-0378">Hydrolase</keyword>
<keyword id="KW-0547">Nucleotide-binding</keyword>
<keyword id="KW-0539">Nucleus</keyword>
<keyword id="KW-0597">Phosphoprotein</keyword>
<keyword id="KW-0656">Proto-oncogene</keyword>
<keyword id="KW-1185">Reference proteome</keyword>
<keyword id="KW-0694">RNA-binding</keyword>
<keyword id="KW-0832">Ubl conjugation</keyword>
<feature type="chain" id="PRO_0000274532" description="Probable ATP-dependent RNA helicase DDX6">
    <location>
        <begin position="1"/>
        <end position="483"/>
    </location>
</feature>
<feature type="domain" description="Helicase ATP-binding" evidence="3">
    <location>
        <begin position="127"/>
        <end position="298"/>
    </location>
</feature>
<feature type="domain" description="Helicase C-terminal" evidence="4">
    <location>
        <begin position="308"/>
        <end position="468"/>
    </location>
</feature>
<feature type="region of interest" description="Disordered" evidence="5">
    <location>
        <begin position="1"/>
        <end position="40"/>
    </location>
</feature>
<feature type="short sequence motif" description="Q motif">
    <location>
        <begin position="96"/>
        <end position="124"/>
    </location>
</feature>
<feature type="short sequence motif" description="DEAD box">
    <location>
        <begin position="246"/>
        <end position="249"/>
    </location>
</feature>
<feature type="binding site" evidence="3">
    <location>
        <begin position="140"/>
        <end position="147"/>
    </location>
    <ligand>
        <name>ATP</name>
        <dbReference type="ChEBI" id="CHEBI:30616"/>
    </ligand>
</feature>
<feature type="modified residue" description="Phosphothreonine" evidence="1">
    <location>
        <position position="36"/>
    </location>
</feature>
<gene>
    <name type="primary">DDX6</name>
</gene>
<protein>
    <recommendedName>
        <fullName>Probable ATP-dependent RNA helicase DDX6</fullName>
        <ecNumber evidence="1">3.6.4.13</ecNumber>
    </recommendedName>
    <alternativeName>
        <fullName>DEAD box protein 6</fullName>
    </alternativeName>
</protein>